<comment type="function">
    <text evidence="1">Substrate-specific adapter of a BCR (BTB-CUL3-RBX1) E3 ubiquitin-protein ligase complex required for mitotic progression and cytokinesis. The BCR(KLHL42) E3 ubiquitin ligase complex mediates the ubiquitination and subsequent degradation of KATNA1. Involved in microtubule dynamics throughout mitosis (By similarity).</text>
</comment>
<comment type="pathway">
    <text>Protein modification; protein ubiquitination.</text>
</comment>
<comment type="subunit">
    <text evidence="1">Component of the BCR(KLHL42) E3 ubiquitin ligase complex, at least composed of CUL3 and KLHL42. Interacts (via the BTB domain) with CUL3. Interacts (via the kelch domains) with KATNA1 (By similarity).</text>
</comment>
<comment type="subcellular location">
    <subcellularLocation>
        <location evidence="1">Cytoplasm</location>
    </subcellularLocation>
    <subcellularLocation>
        <location evidence="1">Cytoplasm</location>
        <location evidence="1">Cytoskeleton</location>
        <location evidence="1">Spindle</location>
    </subcellularLocation>
    <text evidence="1">Predominantly in mitotic cells. Localized diffusely in the cytoplasm during the interphase. During metaphase is localized throughout the cell and more widely dispersed than the microtubules. In anaphase cells is localized between the two sets of separated chromosomes as well as at the spindle poles (By similarity). During telophase is localized arround the nuclei of the two daughter cells. Not detected at the midbody region during cytokinesis.</text>
</comment>
<protein>
    <recommendedName>
        <fullName>Kelch-like protein 42</fullName>
    </recommendedName>
    <alternativeName>
        <fullName>Cullin-3-binding protein 9</fullName>
        <shortName>Ctb9</shortName>
    </alternativeName>
    <alternativeName>
        <fullName>Kelch domain-containing protein 5</fullName>
    </alternativeName>
</protein>
<keyword id="KW-0131">Cell cycle</keyword>
<keyword id="KW-0132">Cell division</keyword>
<keyword id="KW-0963">Cytoplasm</keyword>
<keyword id="KW-0206">Cytoskeleton</keyword>
<keyword id="KW-0880">Kelch repeat</keyword>
<keyword id="KW-0498">Mitosis</keyword>
<keyword id="KW-1185">Reference proteome</keyword>
<keyword id="KW-0677">Repeat</keyword>
<keyword id="KW-0833">Ubl conjugation pathway</keyword>
<reference key="1">
    <citation type="journal article" date="2005" name="Science">
        <title>The transcriptional landscape of the mammalian genome.</title>
        <authorList>
            <person name="Carninci P."/>
            <person name="Kasukawa T."/>
            <person name="Katayama S."/>
            <person name="Gough J."/>
            <person name="Frith M.C."/>
            <person name="Maeda N."/>
            <person name="Oyama R."/>
            <person name="Ravasi T."/>
            <person name="Lenhard B."/>
            <person name="Wells C."/>
            <person name="Kodzius R."/>
            <person name="Shimokawa K."/>
            <person name="Bajic V.B."/>
            <person name="Brenner S.E."/>
            <person name="Batalov S."/>
            <person name="Forrest A.R."/>
            <person name="Zavolan M."/>
            <person name="Davis M.J."/>
            <person name="Wilming L.G."/>
            <person name="Aidinis V."/>
            <person name="Allen J.E."/>
            <person name="Ambesi-Impiombato A."/>
            <person name="Apweiler R."/>
            <person name="Aturaliya R.N."/>
            <person name="Bailey T.L."/>
            <person name="Bansal M."/>
            <person name="Baxter L."/>
            <person name="Beisel K.W."/>
            <person name="Bersano T."/>
            <person name="Bono H."/>
            <person name="Chalk A.M."/>
            <person name="Chiu K.P."/>
            <person name="Choudhary V."/>
            <person name="Christoffels A."/>
            <person name="Clutterbuck D.R."/>
            <person name="Crowe M.L."/>
            <person name="Dalla E."/>
            <person name="Dalrymple B.P."/>
            <person name="de Bono B."/>
            <person name="Della Gatta G."/>
            <person name="di Bernardo D."/>
            <person name="Down T."/>
            <person name="Engstrom P."/>
            <person name="Fagiolini M."/>
            <person name="Faulkner G."/>
            <person name="Fletcher C.F."/>
            <person name="Fukushima T."/>
            <person name="Furuno M."/>
            <person name="Futaki S."/>
            <person name="Gariboldi M."/>
            <person name="Georgii-Hemming P."/>
            <person name="Gingeras T.R."/>
            <person name="Gojobori T."/>
            <person name="Green R.E."/>
            <person name="Gustincich S."/>
            <person name="Harbers M."/>
            <person name="Hayashi Y."/>
            <person name="Hensch T.K."/>
            <person name="Hirokawa N."/>
            <person name="Hill D."/>
            <person name="Huminiecki L."/>
            <person name="Iacono M."/>
            <person name="Ikeo K."/>
            <person name="Iwama A."/>
            <person name="Ishikawa T."/>
            <person name="Jakt M."/>
            <person name="Kanapin A."/>
            <person name="Katoh M."/>
            <person name="Kawasawa Y."/>
            <person name="Kelso J."/>
            <person name="Kitamura H."/>
            <person name="Kitano H."/>
            <person name="Kollias G."/>
            <person name="Krishnan S.P."/>
            <person name="Kruger A."/>
            <person name="Kummerfeld S.K."/>
            <person name="Kurochkin I.V."/>
            <person name="Lareau L.F."/>
            <person name="Lazarevic D."/>
            <person name="Lipovich L."/>
            <person name="Liu J."/>
            <person name="Liuni S."/>
            <person name="McWilliam S."/>
            <person name="Madan Babu M."/>
            <person name="Madera M."/>
            <person name="Marchionni L."/>
            <person name="Matsuda H."/>
            <person name="Matsuzawa S."/>
            <person name="Miki H."/>
            <person name="Mignone F."/>
            <person name="Miyake S."/>
            <person name="Morris K."/>
            <person name="Mottagui-Tabar S."/>
            <person name="Mulder N."/>
            <person name="Nakano N."/>
            <person name="Nakauchi H."/>
            <person name="Ng P."/>
            <person name="Nilsson R."/>
            <person name="Nishiguchi S."/>
            <person name="Nishikawa S."/>
            <person name="Nori F."/>
            <person name="Ohara O."/>
            <person name="Okazaki Y."/>
            <person name="Orlando V."/>
            <person name="Pang K.C."/>
            <person name="Pavan W.J."/>
            <person name="Pavesi G."/>
            <person name="Pesole G."/>
            <person name="Petrovsky N."/>
            <person name="Piazza S."/>
            <person name="Reed J."/>
            <person name="Reid J.F."/>
            <person name="Ring B.Z."/>
            <person name="Ringwald M."/>
            <person name="Rost B."/>
            <person name="Ruan Y."/>
            <person name="Salzberg S.L."/>
            <person name="Sandelin A."/>
            <person name="Schneider C."/>
            <person name="Schoenbach C."/>
            <person name="Sekiguchi K."/>
            <person name="Semple C.A."/>
            <person name="Seno S."/>
            <person name="Sessa L."/>
            <person name="Sheng Y."/>
            <person name="Shibata Y."/>
            <person name="Shimada H."/>
            <person name="Shimada K."/>
            <person name="Silva D."/>
            <person name="Sinclair B."/>
            <person name="Sperling S."/>
            <person name="Stupka E."/>
            <person name="Sugiura K."/>
            <person name="Sultana R."/>
            <person name="Takenaka Y."/>
            <person name="Taki K."/>
            <person name="Tammoja K."/>
            <person name="Tan S.L."/>
            <person name="Tang S."/>
            <person name="Taylor M.S."/>
            <person name="Tegner J."/>
            <person name="Teichmann S.A."/>
            <person name="Ueda H.R."/>
            <person name="van Nimwegen E."/>
            <person name="Verardo R."/>
            <person name="Wei C.L."/>
            <person name="Yagi K."/>
            <person name="Yamanishi H."/>
            <person name="Zabarovsky E."/>
            <person name="Zhu S."/>
            <person name="Zimmer A."/>
            <person name="Hide W."/>
            <person name="Bult C."/>
            <person name="Grimmond S.M."/>
            <person name="Teasdale R.D."/>
            <person name="Liu E.T."/>
            <person name="Brusic V."/>
            <person name="Quackenbush J."/>
            <person name="Wahlestedt C."/>
            <person name="Mattick J.S."/>
            <person name="Hume D.A."/>
            <person name="Kai C."/>
            <person name="Sasaki D."/>
            <person name="Tomaru Y."/>
            <person name="Fukuda S."/>
            <person name="Kanamori-Katayama M."/>
            <person name="Suzuki M."/>
            <person name="Aoki J."/>
            <person name="Arakawa T."/>
            <person name="Iida J."/>
            <person name="Imamura K."/>
            <person name="Itoh M."/>
            <person name="Kato T."/>
            <person name="Kawaji H."/>
            <person name="Kawagashira N."/>
            <person name="Kawashima T."/>
            <person name="Kojima M."/>
            <person name="Kondo S."/>
            <person name="Konno H."/>
            <person name="Nakano K."/>
            <person name="Ninomiya N."/>
            <person name="Nishio T."/>
            <person name="Okada M."/>
            <person name="Plessy C."/>
            <person name="Shibata K."/>
            <person name="Shiraki T."/>
            <person name="Suzuki S."/>
            <person name="Tagami M."/>
            <person name="Waki K."/>
            <person name="Watahiki A."/>
            <person name="Okamura-Oho Y."/>
            <person name="Suzuki H."/>
            <person name="Kawai J."/>
            <person name="Hayashizaki Y."/>
        </authorList>
    </citation>
    <scope>NUCLEOTIDE SEQUENCE [LARGE SCALE MRNA]</scope>
    <source>
        <strain>C57BL/6J</strain>
        <tissue>Cerebellum</tissue>
        <tissue>Spinal cord</tissue>
    </source>
</reference>
<reference key="2">
    <citation type="journal article" date="2003" name="DNA Res.">
        <title>Prediction of the coding sequences of mouse homologues of KIAA gene: III. The complete nucleotide sequences of 500 mouse KIAA-homologous cDNAs identified by screening of terminal sequences of cDNA clones randomly sampled from size-fractionated libraries.</title>
        <authorList>
            <person name="Okazaki N."/>
            <person name="Kikuno R."/>
            <person name="Ohara R."/>
            <person name="Inamoto S."/>
            <person name="Koseki H."/>
            <person name="Hiraoka S."/>
            <person name="Saga Y."/>
            <person name="Nagase T."/>
            <person name="Ohara O."/>
            <person name="Koga H."/>
        </authorList>
    </citation>
    <scope>NUCLEOTIDE SEQUENCE [LARGE SCALE MRNA] OF 212-493</scope>
    <source>
        <tissue>Embryonic tail</tissue>
    </source>
</reference>
<dbReference type="EMBL" id="AK048908">
    <property type="protein sequence ID" value="BAC33488.1"/>
    <property type="molecule type" value="mRNA"/>
</dbReference>
<dbReference type="EMBL" id="AK083047">
    <property type="protein sequence ID" value="BAC38745.1"/>
    <property type="molecule type" value="mRNA"/>
</dbReference>
<dbReference type="EMBL" id="AK129335">
    <property type="protein sequence ID" value="BAC98145.1"/>
    <property type="molecule type" value="mRNA"/>
</dbReference>
<dbReference type="CCDS" id="CCDS39716.1"/>
<dbReference type="RefSeq" id="NP_001074706.1">
    <property type="nucleotide sequence ID" value="NM_001081237.2"/>
</dbReference>
<dbReference type="SMR" id="Q8BFQ9"/>
<dbReference type="FunCoup" id="Q8BFQ9">
    <property type="interactions" value="136"/>
</dbReference>
<dbReference type="STRING" id="10090.ENSMUSP00000042558"/>
<dbReference type="PhosphoSitePlus" id="Q8BFQ9"/>
<dbReference type="PaxDb" id="10090-ENSMUSP00000042558"/>
<dbReference type="ProteomicsDB" id="263656"/>
<dbReference type="Pumba" id="Q8BFQ9"/>
<dbReference type="Antibodypedia" id="12736">
    <property type="antibodies" value="125 antibodies from 26 providers"/>
</dbReference>
<dbReference type="Ensembl" id="ENSMUST00000036003.8">
    <property type="protein sequence ID" value="ENSMUSP00000042558.8"/>
    <property type="gene ID" value="ENSMUSG00000040102.11"/>
</dbReference>
<dbReference type="GeneID" id="232539"/>
<dbReference type="KEGG" id="mmu:232539"/>
<dbReference type="UCSC" id="uc009esu.1">
    <property type="organism name" value="mouse"/>
</dbReference>
<dbReference type="AGR" id="MGI:2444786"/>
<dbReference type="CTD" id="57542"/>
<dbReference type="MGI" id="MGI:2444786">
    <property type="gene designation" value="Klhl42"/>
</dbReference>
<dbReference type="VEuPathDB" id="HostDB:ENSMUSG00000040102"/>
<dbReference type="eggNOG" id="KOG1072">
    <property type="taxonomic scope" value="Eukaryota"/>
</dbReference>
<dbReference type="GeneTree" id="ENSGT00940000160124"/>
<dbReference type="HOGENOM" id="CLU_021248_1_0_1"/>
<dbReference type="InParanoid" id="Q8BFQ9"/>
<dbReference type="OMA" id="SDTWTVF"/>
<dbReference type="OrthoDB" id="45365at2759"/>
<dbReference type="PhylomeDB" id="Q8BFQ9"/>
<dbReference type="TreeFam" id="TF328485"/>
<dbReference type="Reactome" id="R-MMU-8951664">
    <property type="pathway name" value="Neddylation"/>
</dbReference>
<dbReference type="Reactome" id="R-MMU-983168">
    <property type="pathway name" value="Antigen processing: Ubiquitination &amp; Proteasome degradation"/>
</dbReference>
<dbReference type="UniPathway" id="UPA00143"/>
<dbReference type="BioGRID-ORCS" id="232539">
    <property type="hits" value="3 hits in 77 CRISPR screens"/>
</dbReference>
<dbReference type="PRO" id="PR:Q8BFQ9"/>
<dbReference type="Proteomes" id="UP000000589">
    <property type="component" value="Chromosome 6"/>
</dbReference>
<dbReference type="RNAct" id="Q8BFQ9">
    <property type="molecule type" value="protein"/>
</dbReference>
<dbReference type="Bgee" id="ENSMUSG00000040102">
    <property type="expression patterns" value="Expressed in dorsal pancreas and 213 other cell types or tissues"/>
</dbReference>
<dbReference type="ExpressionAtlas" id="Q8BFQ9">
    <property type="expression patterns" value="baseline and differential"/>
</dbReference>
<dbReference type="GO" id="GO:0031463">
    <property type="term" value="C:Cul3-RING ubiquitin ligase complex"/>
    <property type="evidence" value="ECO:0000250"/>
    <property type="project" value="UniProtKB"/>
</dbReference>
<dbReference type="GO" id="GO:0005737">
    <property type="term" value="C:cytoplasm"/>
    <property type="evidence" value="ECO:0007669"/>
    <property type="project" value="UniProtKB-SubCell"/>
</dbReference>
<dbReference type="GO" id="GO:0005819">
    <property type="term" value="C:spindle"/>
    <property type="evidence" value="ECO:0007669"/>
    <property type="project" value="UniProtKB-SubCell"/>
</dbReference>
<dbReference type="GO" id="GO:0004842">
    <property type="term" value="F:ubiquitin-protein transferase activity"/>
    <property type="evidence" value="ECO:0007669"/>
    <property type="project" value="Ensembl"/>
</dbReference>
<dbReference type="GO" id="GO:0051301">
    <property type="term" value="P:cell division"/>
    <property type="evidence" value="ECO:0007669"/>
    <property type="project" value="UniProtKB-KW"/>
</dbReference>
<dbReference type="GO" id="GO:0043161">
    <property type="term" value="P:proteasome-mediated ubiquitin-dependent protein catabolic process"/>
    <property type="evidence" value="ECO:0000250"/>
    <property type="project" value="UniProtKB"/>
</dbReference>
<dbReference type="GO" id="GO:0000209">
    <property type="term" value="P:protein polyubiquitination"/>
    <property type="evidence" value="ECO:0000250"/>
    <property type="project" value="UniProtKB"/>
</dbReference>
<dbReference type="GO" id="GO:0032886">
    <property type="term" value="P:regulation of microtubule-based process"/>
    <property type="evidence" value="ECO:0000250"/>
    <property type="project" value="UniProtKB"/>
</dbReference>
<dbReference type="CDD" id="cd18478">
    <property type="entry name" value="BACK_KLHL42_KLHDC5"/>
    <property type="match status" value="1"/>
</dbReference>
<dbReference type="CDD" id="cd18319">
    <property type="entry name" value="BTB_POZ_KLHL42"/>
    <property type="match status" value="1"/>
</dbReference>
<dbReference type="FunFam" id="2.120.10.80:FF:000048">
    <property type="entry name" value="Kelch-like family, member 42"/>
    <property type="match status" value="1"/>
</dbReference>
<dbReference type="FunFam" id="3.30.710.10:FF:000079">
    <property type="entry name" value="Kelch-like family, member 42"/>
    <property type="match status" value="1"/>
</dbReference>
<dbReference type="Gene3D" id="2.120.10.80">
    <property type="entry name" value="Kelch-type beta propeller"/>
    <property type="match status" value="1"/>
</dbReference>
<dbReference type="Gene3D" id="3.30.710.10">
    <property type="entry name" value="Potassium Channel Kv1.1, Chain A"/>
    <property type="match status" value="1"/>
</dbReference>
<dbReference type="InterPro" id="IPR000210">
    <property type="entry name" value="BTB/POZ_dom"/>
</dbReference>
<dbReference type="InterPro" id="IPR052392">
    <property type="entry name" value="Kelch-BTB_domain-containing"/>
</dbReference>
<dbReference type="InterPro" id="IPR015915">
    <property type="entry name" value="Kelch-typ_b-propeller"/>
</dbReference>
<dbReference type="InterPro" id="IPR006652">
    <property type="entry name" value="Kelch_1"/>
</dbReference>
<dbReference type="InterPro" id="IPR044727">
    <property type="entry name" value="KLHL42_BACK"/>
</dbReference>
<dbReference type="InterPro" id="IPR011333">
    <property type="entry name" value="SKP1/BTB/POZ_sf"/>
</dbReference>
<dbReference type="PANTHER" id="PTHR46375">
    <property type="entry name" value="KELCH REPEAT AND BTB DOMAIN-CONTAINING PROTEIN 13-RELATED"/>
    <property type="match status" value="1"/>
</dbReference>
<dbReference type="PANTHER" id="PTHR46375:SF4">
    <property type="entry name" value="KELCH-LIKE FAMILY, MEMBER 42"/>
    <property type="match status" value="1"/>
</dbReference>
<dbReference type="Pfam" id="PF01344">
    <property type="entry name" value="Kelch_1"/>
    <property type="match status" value="3"/>
</dbReference>
<dbReference type="SMART" id="SM00612">
    <property type="entry name" value="Kelch"/>
    <property type="match status" value="3"/>
</dbReference>
<dbReference type="SUPFAM" id="SSF117281">
    <property type="entry name" value="Kelch motif"/>
    <property type="match status" value="1"/>
</dbReference>
<dbReference type="SUPFAM" id="SSF54695">
    <property type="entry name" value="POZ domain"/>
    <property type="match status" value="1"/>
</dbReference>
<dbReference type="PROSITE" id="PS50097">
    <property type="entry name" value="BTB"/>
    <property type="match status" value="1"/>
</dbReference>
<evidence type="ECO:0000250" key="1"/>
<evidence type="ECO:0000255" key="2">
    <source>
        <dbReference type="PROSITE-ProRule" id="PRU00037"/>
    </source>
</evidence>
<gene>
    <name type="primary">Klhl42</name>
    <name type="synonym">Kiaa1340</name>
    <name type="synonym">Klhdc5</name>
</gene>
<name>KLH42_MOUSE</name>
<organism>
    <name type="scientific">Mus musculus</name>
    <name type="common">Mouse</name>
    <dbReference type="NCBI Taxonomy" id="10090"/>
    <lineage>
        <taxon>Eukaryota</taxon>
        <taxon>Metazoa</taxon>
        <taxon>Chordata</taxon>
        <taxon>Craniata</taxon>
        <taxon>Vertebrata</taxon>
        <taxon>Euteleostomi</taxon>
        <taxon>Mammalia</taxon>
        <taxon>Eutheria</taxon>
        <taxon>Euarchontoglires</taxon>
        <taxon>Glires</taxon>
        <taxon>Rodentia</taxon>
        <taxon>Myomorpha</taxon>
        <taxon>Muroidea</taxon>
        <taxon>Muridae</taxon>
        <taxon>Murinae</taxon>
        <taxon>Mus</taxon>
        <taxon>Mus</taxon>
    </lineage>
</organism>
<proteinExistence type="evidence at transcript level"/>
<sequence length="493" mass="55599">MSAEEMVQIRLEDRCYPVSKSKLIEQSDYFRALYRSGMREAVRPEVGPEVQQLRGLSAPGLRLVLDFINAGGAREGWGLSEDELAEASVLSEMVEAASFLQVTALLRLLLSHVRLGNCLELYRLAQVYGLPDLQDACLRFMVLRFHQVLCQPQFPLLLSPPQAPGDCSLKQRLREARMRGTPVLVALGDFLGGPLAPHPYQGEPPSMLRYEETTERWFPLANNLPPDLVNVRGYGSAILDNYLFIVGGYRITSQEISAAHSYNPITNEWLQVASMNQKRSNFKLVAVNSKLYAIGGQAVSNVECYNPEQDAWNFVAPLPNPLAEFSACECKGKIYVIGGYTTRDRNMNILQYCPSADLWTLFETCDVHIRKQQMVSVEETIYIVGGCLHELGPNRRSSQSEDMLTVQSYNTVTRQWLYLKENTSKSGLNLTCALHNDGIYIMSRDVTLSTSLEHRVFLKYNIFADSWEAFRRFPAFGHNLLISSLYLPNKAET</sequence>
<accession>Q8BFQ9</accession>
<accession>Q6ZPT4</accession>
<feature type="chain" id="PRO_0000119129" description="Kelch-like protein 42">
    <location>
        <begin position="1"/>
        <end position="493"/>
    </location>
</feature>
<feature type="domain" description="BTB" evidence="2">
    <location>
        <begin position="5"/>
        <end position="77"/>
    </location>
</feature>
<feature type="repeat" description="Kelch 1">
    <location>
        <begin position="183"/>
        <end position="241"/>
    </location>
</feature>
<feature type="repeat" description="Kelch 2">
    <location>
        <begin position="242"/>
        <end position="289"/>
    </location>
</feature>
<feature type="repeat" description="Kelch 3">
    <location>
        <begin position="291"/>
        <end position="332"/>
    </location>
</feature>
<feature type="repeat" description="Kelch 4">
    <location>
        <begin position="334"/>
        <end position="379"/>
    </location>
</feature>
<feature type="repeat" description="Kelch 5">
    <location>
        <begin position="381"/>
        <end position="436"/>
    </location>
</feature>
<feature type="repeat" description="Kelch 6">
    <location>
        <begin position="438"/>
        <end position="487"/>
    </location>
</feature>